<protein>
    <recommendedName>
        <fullName evidence="4">Outer membrane protein SlpA</fullName>
    </recommendedName>
    <alternativeName>
        <fullName>P100 protein</fullName>
    </alternativeName>
</protein>
<comment type="function">
    <text evidence="1 4">Plays an important role in the structural organization and integrity of the cell envelope, bridging the outer membrane to the peptidoglyan layer. Appears to be a nonselective channel.</text>
</comment>
<comment type="subunit">
    <text evidence="1">Homotrimer.</text>
</comment>
<comment type="subcellular location">
    <subcellularLocation>
        <location evidence="1">Cell outer membrane</location>
        <topology evidence="1">Multi-pass membrane protein</topology>
    </subcellularLocation>
</comment>
<comment type="domain">
    <text evidence="1 4">Exhibits a tripartite organization, with its C-terminal part forming a homotrimeric 28-stranded OM beta-barrel (OMBB), its central part forming a long trimeric coiled coil that can traverse the large periplasmic space, and the extreme N-terminal part forming an SLH domain trimer that can interact with the PG layer.</text>
</comment>
<feature type="signal peptide" evidence="2">
    <location>
        <begin position="1"/>
        <end position="23"/>
    </location>
</feature>
<feature type="chain" id="PRO_0000032641" description="Outer membrane protein SlpA">
    <location>
        <begin position="24"/>
        <end position="917"/>
    </location>
</feature>
<feature type="domain" description="SLH" evidence="3">
    <location>
        <begin position="24"/>
        <end position="84"/>
    </location>
</feature>
<proteinExistence type="inferred from homology"/>
<name>SLAP2_THET8</name>
<reference key="1">
    <citation type="journal article" date="1992" name="J. Bacteriol.">
        <title>Sequence of the S-layer gene of Thermus thermophilus HB8 and functionality of its promoter in Escherichia coli.</title>
        <authorList>
            <person name="Faraldo M.M."/>
            <person name="de Pedro M.A."/>
            <person name="Berenguer J."/>
        </authorList>
    </citation>
    <scope>NUCLEOTIDE SEQUENCE [GENOMIC DNA]</scope>
</reference>
<reference key="2">
    <citation type="journal article" date="1995" name="Mol. Microbiol.">
        <title>glmS of Thermus thermophilus HB8: an essential gene for cell-wall synthesis identified immediately upstream of the S-layer gene.</title>
        <authorList>
            <person name="Fernandez-Herrero L.A."/>
            <person name="Badet-Denisot M.-A."/>
            <person name="Badet B."/>
            <person name="Berenguer J."/>
        </authorList>
    </citation>
    <scope>NUCLEOTIDE SEQUENCE [GENOMIC DNA] OF 1-11</scope>
</reference>
<reference key="3">
    <citation type="journal article" date="2022" name="Proc. Natl. Acad. Sci. U.S.A.">
        <title>A multidomain connector links the outer membrane and cell wall in phylogenetically deep-branching bacteria.</title>
        <authorList>
            <person name="von Kugelgen A."/>
            <person name="van Dorst S."/>
            <person name="Alva V."/>
            <person name="Bharat T.A.M."/>
        </authorList>
    </citation>
    <scope>FUNCTION</scope>
    <scope>DOMAIN</scope>
</reference>
<evidence type="ECO:0000250" key="1">
    <source>
        <dbReference type="UniProtKB" id="Q9RRB6"/>
    </source>
</evidence>
<evidence type="ECO:0000255" key="2"/>
<evidence type="ECO:0000255" key="3">
    <source>
        <dbReference type="PROSITE-ProRule" id="PRU00777"/>
    </source>
</evidence>
<evidence type="ECO:0000305" key="4">
    <source>
    </source>
</evidence>
<gene>
    <name type="primary">slpA</name>
    <name type="synonym">slb</name>
</gene>
<organism>
    <name type="scientific">Thermus thermophilus (strain ATCC 27634 / DSM 579 / HB8)</name>
    <dbReference type="NCBI Taxonomy" id="300852"/>
    <lineage>
        <taxon>Bacteria</taxon>
        <taxon>Thermotogati</taxon>
        <taxon>Deinococcota</taxon>
        <taxon>Deinococci</taxon>
        <taxon>Thermales</taxon>
        <taxon>Thermaceae</taxon>
        <taxon>Thermus</taxon>
    </lineage>
</organism>
<dbReference type="EMBL" id="X57333">
    <property type="protein sequence ID" value="CAA40609.1"/>
    <property type="molecule type" value="Genomic_DNA"/>
</dbReference>
<dbReference type="EMBL" id="U17352">
    <property type="protein sequence ID" value="AAA86987.1"/>
    <property type="molecule type" value="Genomic_DNA"/>
</dbReference>
<dbReference type="PIR" id="S26365">
    <property type="entry name" value="S26365"/>
</dbReference>
<dbReference type="SMR" id="P35830"/>
<dbReference type="GO" id="GO:0009279">
    <property type="term" value="C:cell outer membrane"/>
    <property type="evidence" value="ECO:0007669"/>
    <property type="project" value="UniProtKB-SubCell"/>
</dbReference>
<dbReference type="GO" id="GO:0046930">
    <property type="term" value="C:pore complex"/>
    <property type="evidence" value="ECO:0007669"/>
    <property type="project" value="UniProtKB-KW"/>
</dbReference>
<dbReference type="GO" id="GO:0015288">
    <property type="term" value="F:porin activity"/>
    <property type="evidence" value="ECO:0007669"/>
    <property type="project" value="UniProtKB-KW"/>
</dbReference>
<dbReference type="GO" id="GO:0006811">
    <property type="term" value="P:monoatomic ion transport"/>
    <property type="evidence" value="ECO:0007669"/>
    <property type="project" value="UniProtKB-KW"/>
</dbReference>
<dbReference type="Gene3D" id="1.10.287.1490">
    <property type="match status" value="1"/>
</dbReference>
<dbReference type="InterPro" id="IPR051465">
    <property type="entry name" value="Cell_Envelope_Struct_Comp"/>
</dbReference>
<dbReference type="InterPro" id="IPR001119">
    <property type="entry name" value="SLH_dom"/>
</dbReference>
<dbReference type="InterPro" id="IPR048736">
    <property type="entry name" value="SlpA_C"/>
</dbReference>
<dbReference type="PANTHER" id="PTHR43308:SF1">
    <property type="entry name" value="OUTER MEMBRANE PROTEIN ALPHA"/>
    <property type="match status" value="1"/>
</dbReference>
<dbReference type="PANTHER" id="PTHR43308">
    <property type="entry name" value="OUTER MEMBRANE PROTEIN ALPHA-RELATED"/>
    <property type="match status" value="1"/>
</dbReference>
<dbReference type="Pfam" id="PF00395">
    <property type="entry name" value="SLH"/>
    <property type="match status" value="1"/>
</dbReference>
<dbReference type="Pfam" id="PF21620">
    <property type="entry name" value="SlpA_C"/>
    <property type="match status" value="1"/>
</dbReference>
<dbReference type="PROSITE" id="PS51272">
    <property type="entry name" value="SLH"/>
    <property type="match status" value="1"/>
</dbReference>
<accession>P35830</accession>
<accession>Q6LCW2</accession>
<keyword id="KW-0998">Cell outer membrane</keyword>
<keyword id="KW-0406">Ion transport</keyword>
<keyword id="KW-0472">Membrane</keyword>
<keyword id="KW-0626">Porin</keyword>
<keyword id="KW-0732">Signal</keyword>
<keyword id="KW-0812">Transmembrane</keyword>
<keyword id="KW-1134">Transmembrane beta strand</keyword>
<keyword id="KW-0813">Transport</keyword>
<sequence length="917" mass="96133">MKKRLVTLLAGLLTVLSMGFGLAQFSDVPAGHWAKEAVEALAAKGIILGFPDGTFRGNENLTRYQAALLIYRLLQQIEEELKTQGTSPTMEALAPEDLEAMIAELKAQPMPEPGMDQAALKDLMDRVEAASIAADTALAQAQQLAERLDALAQDVEGVKGDLAGLRSQVEANADAIQALNELAVLLNQDVLSLQDRVTALEKMVSGGQELPDLEQFATKEDVAAVQEFAAALRSDLVGLSEKVSKLEGTVGDLSGKVATLQRNAFTISGSLSLNYSVYRAWGPDASAAGPGTANTFDIDRLFSSKFSTGDGNGNGSVGDEADLGKNTEGVTNATLSVSFSTGKLDAASDPGKLNSYPGLVQFSLRAKLTNPGKYDPSTGAPTYPINLTLDEFSSTLAVAKDQTLSFSFGRSVRSKFTEYVFDNDYNSRGHGFVATYKPGLLGATLTGVYGSKGANNGDFTYFRGARLALSPVEGIALGGSFVQEGLDANQGTTSASFPAPTTVYGVDASVKLGPVGLAGEYFNSDAAPNANGYYVKADVALGSISVAGNYRNIGAGVTGANMLSGDATSTLDQGGWGGVDSSGNVINGAPFRSNRQGFGVSASAGLGPITVKGYYDSSTVLANETITNSYGAFNYSANNQLVAYGGQADLAFGGFTLSGFYRIAQLNGSTTRYILTEKPAEAVYASEYGAKLAHDGASKDALVPKLNFTAAYTQKYDNATSGFTTQDIAVYGSYELALGPLTLKPMGRYHTQDAAAASTSSDYTTVKYGVAASIALDLPFKPSLSGEYYARSTQVTSANSGSSATGTISESKYAVGLKLGEFLFKNSSVEAKYASYTGSGLNAPILLGVADAASSTTSDYLYNNAVSSVGSNRGSVTGWYFTWTYWDLTFAYVEADVNNNGNQTHGQAFKISYTVKF</sequence>